<gene>
    <name evidence="1" type="primary">nusB</name>
    <name type="ordered locus">RT0152</name>
</gene>
<comment type="function">
    <text evidence="1">Involved in transcription antitermination. Required for transcription of ribosomal RNA (rRNA) genes. Binds specifically to the boxA antiterminator sequence of the ribosomal RNA (rrn) operons.</text>
</comment>
<comment type="similarity">
    <text evidence="1">Belongs to the NusB family.</text>
</comment>
<comment type="sequence caution" evidence="2">
    <conflict type="erroneous initiation">
        <sequence resource="EMBL-CDS" id="AAU03636"/>
    </conflict>
</comment>
<feature type="chain" id="PRO_0000265582" description="Transcription antitermination protein NusB">
    <location>
        <begin position="1"/>
        <end position="154"/>
    </location>
</feature>
<reference key="1">
    <citation type="journal article" date="2004" name="J. Bacteriol.">
        <title>Complete genome sequence of Rickettsia typhi and comparison with sequences of other Rickettsiae.</title>
        <authorList>
            <person name="McLeod M.P."/>
            <person name="Qin X."/>
            <person name="Karpathy S.E."/>
            <person name="Gioia J."/>
            <person name="Highlander S.K."/>
            <person name="Fox G.E."/>
            <person name="McNeill T.Z."/>
            <person name="Jiang H."/>
            <person name="Muzny D."/>
            <person name="Jacob L.S."/>
            <person name="Hawes A.C."/>
            <person name="Sodergren E."/>
            <person name="Gill R."/>
            <person name="Hume J."/>
            <person name="Morgan M."/>
            <person name="Fan G."/>
            <person name="Amin A.G."/>
            <person name="Gibbs R.A."/>
            <person name="Hong C."/>
            <person name="Yu X.-J."/>
            <person name="Walker D.H."/>
            <person name="Weinstock G.M."/>
        </authorList>
    </citation>
    <scope>NUCLEOTIDE SEQUENCE [LARGE SCALE GENOMIC DNA]</scope>
    <source>
        <strain>ATCC VR-144 / Wilmington</strain>
    </source>
</reference>
<protein>
    <recommendedName>
        <fullName evidence="1">Transcription antitermination protein NusB</fullName>
    </recommendedName>
    <alternativeName>
        <fullName evidence="1">Antitermination factor NusB</fullName>
    </alternativeName>
</protein>
<accession>Q68XK6</accession>
<proteinExistence type="inferred from homology"/>
<name>NUSB_RICTY</name>
<evidence type="ECO:0000255" key="1">
    <source>
        <dbReference type="HAMAP-Rule" id="MF_00073"/>
    </source>
</evidence>
<evidence type="ECO:0000305" key="2"/>
<keyword id="KW-0694">RNA-binding</keyword>
<keyword id="KW-0804">Transcription</keyword>
<keyword id="KW-0889">Transcription antitermination</keyword>
<keyword id="KW-0805">Transcription regulation</keyword>
<organism>
    <name type="scientific">Rickettsia typhi (strain ATCC VR-144 / Wilmington)</name>
    <dbReference type="NCBI Taxonomy" id="257363"/>
    <lineage>
        <taxon>Bacteria</taxon>
        <taxon>Pseudomonadati</taxon>
        <taxon>Pseudomonadota</taxon>
        <taxon>Alphaproteobacteria</taxon>
        <taxon>Rickettsiales</taxon>
        <taxon>Rickettsiaceae</taxon>
        <taxon>Rickettsieae</taxon>
        <taxon>Rickettsia</taxon>
        <taxon>typhus group</taxon>
    </lineage>
</organism>
<dbReference type="EMBL" id="AE017197">
    <property type="protein sequence ID" value="AAU03636.1"/>
    <property type="status" value="ALT_INIT"/>
    <property type="molecule type" value="Genomic_DNA"/>
</dbReference>
<dbReference type="RefSeq" id="WP_014419403.1">
    <property type="nucleotide sequence ID" value="NC_006142.1"/>
</dbReference>
<dbReference type="SMR" id="Q68XK6"/>
<dbReference type="KEGG" id="rty:RT0152"/>
<dbReference type="eggNOG" id="COG0781">
    <property type="taxonomic scope" value="Bacteria"/>
</dbReference>
<dbReference type="HOGENOM" id="CLU_087843_4_3_5"/>
<dbReference type="OrthoDB" id="9797817at2"/>
<dbReference type="Proteomes" id="UP000000604">
    <property type="component" value="Chromosome"/>
</dbReference>
<dbReference type="GO" id="GO:0005829">
    <property type="term" value="C:cytosol"/>
    <property type="evidence" value="ECO:0007669"/>
    <property type="project" value="TreeGrafter"/>
</dbReference>
<dbReference type="GO" id="GO:0003723">
    <property type="term" value="F:RNA binding"/>
    <property type="evidence" value="ECO:0007669"/>
    <property type="project" value="UniProtKB-UniRule"/>
</dbReference>
<dbReference type="GO" id="GO:0006353">
    <property type="term" value="P:DNA-templated transcription termination"/>
    <property type="evidence" value="ECO:0007669"/>
    <property type="project" value="UniProtKB-UniRule"/>
</dbReference>
<dbReference type="GO" id="GO:0031564">
    <property type="term" value="P:transcription antitermination"/>
    <property type="evidence" value="ECO:0007669"/>
    <property type="project" value="UniProtKB-KW"/>
</dbReference>
<dbReference type="CDD" id="cd00619">
    <property type="entry name" value="Terminator_NusB"/>
    <property type="match status" value="1"/>
</dbReference>
<dbReference type="Gene3D" id="1.10.940.10">
    <property type="entry name" value="NusB-like"/>
    <property type="match status" value="1"/>
</dbReference>
<dbReference type="HAMAP" id="MF_00073">
    <property type="entry name" value="NusB"/>
    <property type="match status" value="1"/>
</dbReference>
<dbReference type="InterPro" id="IPR035926">
    <property type="entry name" value="NusB-like_sf"/>
</dbReference>
<dbReference type="InterPro" id="IPR011605">
    <property type="entry name" value="NusB_fam"/>
</dbReference>
<dbReference type="InterPro" id="IPR006027">
    <property type="entry name" value="NusB_RsmB_TIM44"/>
</dbReference>
<dbReference type="NCBIfam" id="TIGR01951">
    <property type="entry name" value="nusB"/>
    <property type="match status" value="1"/>
</dbReference>
<dbReference type="PANTHER" id="PTHR11078:SF3">
    <property type="entry name" value="ANTITERMINATION NUSB DOMAIN-CONTAINING PROTEIN"/>
    <property type="match status" value="1"/>
</dbReference>
<dbReference type="PANTHER" id="PTHR11078">
    <property type="entry name" value="N UTILIZATION SUBSTANCE PROTEIN B-RELATED"/>
    <property type="match status" value="1"/>
</dbReference>
<dbReference type="Pfam" id="PF01029">
    <property type="entry name" value="NusB"/>
    <property type="match status" value="1"/>
</dbReference>
<dbReference type="SUPFAM" id="SSF48013">
    <property type="entry name" value="NusB-like"/>
    <property type="match status" value="1"/>
</dbReference>
<sequence>MSTNKINKKSIARIAAVQALYQNILQNNYDMYDIMQNILACYHSNSIDLPKNFKISLSISHFKMLVKSVFENINKLDEIIDNHLTNDKDPVHMPILLRALLRVSICELLFCSTTPAKVVINEYTDIANDLLNEHEIGFVNSILDKIAQENNKIS</sequence>